<reference key="1">
    <citation type="journal article" date="1998" name="Nature">
        <title>Deciphering the biology of Mycobacterium tuberculosis from the complete genome sequence.</title>
        <authorList>
            <person name="Cole S.T."/>
            <person name="Brosch R."/>
            <person name="Parkhill J."/>
            <person name="Garnier T."/>
            <person name="Churcher C.M."/>
            <person name="Harris D.E."/>
            <person name="Gordon S.V."/>
            <person name="Eiglmeier K."/>
            <person name="Gas S."/>
            <person name="Barry C.E. III"/>
            <person name="Tekaia F."/>
            <person name="Badcock K."/>
            <person name="Basham D."/>
            <person name="Brown D."/>
            <person name="Chillingworth T."/>
            <person name="Connor R."/>
            <person name="Davies R.M."/>
            <person name="Devlin K."/>
            <person name="Feltwell T."/>
            <person name="Gentles S."/>
            <person name="Hamlin N."/>
            <person name="Holroyd S."/>
            <person name="Hornsby T."/>
            <person name="Jagels K."/>
            <person name="Krogh A."/>
            <person name="McLean J."/>
            <person name="Moule S."/>
            <person name="Murphy L.D."/>
            <person name="Oliver S."/>
            <person name="Osborne J."/>
            <person name="Quail M.A."/>
            <person name="Rajandream M.A."/>
            <person name="Rogers J."/>
            <person name="Rutter S."/>
            <person name="Seeger K."/>
            <person name="Skelton S."/>
            <person name="Squares S."/>
            <person name="Squares R."/>
            <person name="Sulston J.E."/>
            <person name="Taylor K."/>
            <person name="Whitehead S."/>
            <person name="Barrell B.G."/>
        </authorList>
    </citation>
    <scope>NUCLEOTIDE SEQUENCE [LARGE SCALE GENOMIC DNA]</scope>
    <source>
        <strain>ATCC 25618 / H37Rv</strain>
    </source>
</reference>
<reference key="2">
    <citation type="journal article" date="2011" name="Mol. Cell. Proteomics">
        <title>Proteogenomic analysis of Mycobacterium tuberculosis by high resolution mass spectrometry.</title>
        <authorList>
            <person name="Kelkar D.S."/>
            <person name="Kumar D."/>
            <person name="Kumar P."/>
            <person name="Balakrishnan L."/>
            <person name="Muthusamy B."/>
            <person name="Yadav A.K."/>
            <person name="Shrivastava P."/>
            <person name="Marimuthu A."/>
            <person name="Anand S."/>
            <person name="Sundaram H."/>
            <person name="Kingsbury R."/>
            <person name="Harsha H.C."/>
            <person name="Nair B."/>
            <person name="Prasad T.S."/>
            <person name="Chauhan D.S."/>
            <person name="Katoch K."/>
            <person name="Katoch V.M."/>
            <person name="Kumar P."/>
            <person name="Chaerkady R."/>
            <person name="Ramachandran S."/>
            <person name="Dash D."/>
            <person name="Pandey A."/>
        </authorList>
    </citation>
    <scope>IDENTIFICATION BY MASS SPECTROMETRY [LARGE SCALE ANALYSIS]</scope>
    <source>
        <strain>ATCC 25618 / H37Rv</strain>
    </source>
</reference>
<dbReference type="EC" id="2.4.2.4"/>
<dbReference type="EMBL" id="AL123456">
    <property type="protein sequence ID" value="CCP46134.1"/>
    <property type="molecule type" value="Genomic_DNA"/>
</dbReference>
<dbReference type="PIR" id="A70843">
    <property type="entry name" value="A70843"/>
</dbReference>
<dbReference type="RefSeq" id="NP_217831.1">
    <property type="nucleotide sequence ID" value="NC_000962.3"/>
</dbReference>
<dbReference type="RefSeq" id="WP_003900016.1">
    <property type="nucleotide sequence ID" value="NZ_NVQJ01000003.1"/>
</dbReference>
<dbReference type="SMR" id="P9WFS1"/>
<dbReference type="FunCoup" id="P9WFS1">
    <property type="interactions" value="49"/>
</dbReference>
<dbReference type="STRING" id="83332.Rv3314c"/>
<dbReference type="PaxDb" id="83332-Rv3314c"/>
<dbReference type="DNASU" id="887929"/>
<dbReference type="GeneID" id="887929"/>
<dbReference type="KEGG" id="mtu:Rv3314c"/>
<dbReference type="KEGG" id="mtv:RVBD_3314c"/>
<dbReference type="TubercuList" id="Rv3314c"/>
<dbReference type="eggNOG" id="COG0213">
    <property type="taxonomic scope" value="Bacteria"/>
</dbReference>
<dbReference type="InParanoid" id="P9WFS1"/>
<dbReference type="OrthoDB" id="9763887at2"/>
<dbReference type="PhylomeDB" id="P9WFS1"/>
<dbReference type="Proteomes" id="UP000001584">
    <property type="component" value="Chromosome"/>
</dbReference>
<dbReference type="GO" id="GO:0005829">
    <property type="term" value="C:cytosol"/>
    <property type="evidence" value="ECO:0000318"/>
    <property type="project" value="GO_Central"/>
</dbReference>
<dbReference type="GO" id="GO:0004645">
    <property type="term" value="F:1,4-alpha-oligoglucan phosphorylase activity"/>
    <property type="evidence" value="ECO:0007669"/>
    <property type="project" value="InterPro"/>
</dbReference>
<dbReference type="GO" id="GO:0009032">
    <property type="term" value="F:thymidine phosphorylase activity"/>
    <property type="evidence" value="ECO:0000318"/>
    <property type="project" value="GO_Central"/>
</dbReference>
<dbReference type="GO" id="GO:0006206">
    <property type="term" value="P:pyrimidine nucleobase metabolic process"/>
    <property type="evidence" value="ECO:0007669"/>
    <property type="project" value="InterPro"/>
</dbReference>
<dbReference type="GO" id="GO:0006213">
    <property type="term" value="P:pyrimidine nucleoside metabolic process"/>
    <property type="evidence" value="ECO:0007669"/>
    <property type="project" value="InterPro"/>
</dbReference>
<dbReference type="FunFam" id="3.40.1030.10:FF:000003">
    <property type="entry name" value="Pyrimidine-nucleoside phosphorylase"/>
    <property type="match status" value="1"/>
</dbReference>
<dbReference type="FunFam" id="1.20.970.10:FF:000004">
    <property type="entry name" value="Thymidine phosphorylase"/>
    <property type="match status" value="1"/>
</dbReference>
<dbReference type="FunFam" id="3.90.1170.30:FF:000005">
    <property type="entry name" value="Thymidine phosphorylase"/>
    <property type="match status" value="1"/>
</dbReference>
<dbReference type="Gene3D" id="3.40.1030.10">
    <property type="entry name" value="Nucleoside phosphorylase/phosphoribosyltransferase catalytic domain"/>
    <property type="match status" value="1"/>
</dbReference>
<dbReference type="Gene3D" id="3.90.1170.30">
    <property type="entry name" value="Pyrimidine nucleoside phosphorylase-like, C-terminal domain"/>
    <property type="match status" value="1"/>
</dbReference>
<dbReference type="Gene3D" id="1.20.970.10">
    <property type="entry name" value="Transferase, Pyrimidine Nucleoside Phosphorylase, Chain C"/>
    <property type="match status" value="1"/>
</dbReference>
<dbReference type="InterPro" id="IPR000312">
    <property type="entry name" value="Glycosyl_Trfase_fam3"/>
</dbReference>
<dbReference type="InterPro" id="IPR017459">
    <property type="entry name" value="Glycosyl_Trfase_fam3_N_dom"/>
</dbReference>
<dbReference type="InterPro" id="IPR036320">
    <property type="entry name" value="Glycosyl_Trfase_fam3_N_dom_sf"/>
</dbReference>
<dbReference type="InterPro" id="IPR035902">
    <property type="entry name" value="Nuc_phospho_transferase"/>
</dbReference>
<dbReference type="InterPro" id="IPR036566">
    <property type="entry name" value="PYNP-like_C_sf"/>
</dbReference>
<dbReference type="InterPro" id="IPR013102">
    <property type="entry name" value="PYNP_C"/>
</dbReference>
<dbReference type="InterPro" id="IPR018090">
    <property type="entry name" value="Pyrmidine_PPas_bac/euk"/>
</dbReference>
<dbReference type="InterPro" id="IPR017872">
    <property type="entry name" value="Pyrmidine_PPase_CS"/>
</dbReference>
<dbReference type="InterPro" id="IPR000053">
    <property type="entry name" value="Thymidine/pyrmidine_PPase"/>
</dbReference>
<dbReference type="NCBIfam" id="NF004490">
    <property type="entry name" value="PRK05820.1"/>
    <property type="match status" value="1"/>
</dbReference>
<dbReference type="NCBIfam" id="TIGR02644">
    <property type="entry name" value="Y_phosphoryl"/>
    <property type="match status" value="1"/>
</dbReference>
<dbReference type="PANTHER" id="PTHR10515">
    <property type="entry name" value="THYMIDINE PHOSPHORYLASE"/>
    <property type="match status" value="1"/>
</dbReference>
<dbReference type="PANTHER" id="PTHR10515:SF0">
    <property type="entry name" value="THYMIDINE PHOSPHORYLASE"/>
    <property type="match status" value="1"/>
</dbReference>
<dbReference type="Pfam" id="PF02885">
    <property type="entry name" value="Glycos_trans_3N"/>
    <property type="match status" value="1"/>
</dbReference>
<dbReference type="Pfam" id="PF00591">
    <property type="entry name" value="Glycos_transf_3"/>
    <property type="match status" value="1"/>
</dbReference>
<dbReference type="Pfam" id="PF07831">
    <property type="entry name" value="PYNP_C"/>
    <property type="match status" value="1"/>
</dbReference>
<dbReference type="PIRSF" id="PIRSF000478">
    <property type="entry name" value="TP_PyNP"/>
    <property type="match status" value="1"/>
</dbReference>
<dbReference type="SMART" id="SM00941">
    <property type="entry name" value="PYNP_C"/>
    <property type="match status" value="1"/>
</dbReference>
<dbReference type="SUPFAM" id="SSF52418">
    <property type="entry name" value="Nucleoside phosphorylase/phosphoribosyltransferase catalytic domain"/>
    <property type="match status" value="1"/>
</dbReference>
<dbReference type="SUPFAM" id="SSF47648">
    <property type="entry name" value="Nucleoside phosphorylase/phosphoribosyltransferase N-terminal domain"/>
    <property type="match status" value="1"/>
</dbReference>
<dbReference type="SUPFAM" id="SSF54680">
    <property type="entry name" value="Pyrimidine nucleoside phosphorylase C-terminal domain"/>
    <property type="match status" value="1"/>
</dbReference>
<dbReference type="PROSITE" id="PS00647">
    <property type="entry name" value="THYMID_PHOSPHORYLASE"/>
    <property type="match status" value="1"/>
</dbReference>
<protein>
    <recommendedName>
        <fullName>Thymidine phosphorylase</fullName>
        <ecNumber>2.4.2.4</ecNumber>
    </recommendedName>
    <alternativeName>
        <fullName>TdRPase</fullName>
    </alternativeName>
</protein>
<keyword id="KW-0328">Glycosyltransferase</keyword>
<keyword id="KW-1185">Reference proteome</keyword>
<keyword id="KW-0808">Transferase</keyword>
<evidence type="ECO:0000250" key="1"/>
<evidence type="ECO:0000305" key="2"/>
<gene>
    <name type="primary">deoA</name>
    <name type="ordered locus">Rv3314c</name>
    <name type="ORF">MTV016.14</name>
</gene>
<sequence length="427" mass="44486">MTDFAFDAPTVIRTKRDGGRLSDAAIDWVVKAYTDGRVADEQMSALLMAIVWRGMDRGEIARWTAAMLASGARLDFTDLPLATVDKHSTGGVGDKITLPLVPVVAACGGAVPQASGRGLGHTGGTLDKLESITGFTANLSNQRVREQLCDVGAAIFAAGQLAPADAKLYALRDITGTVESLPLIASSIMSKKLAEGAGALVLDVKVGSGAFMRSPVQARELAHTMVELGAAHGVPTRALLTEMNCPLGRTVGNALEVAEALEVLAGGGPPDVVELTLRLAGEMLELAGIHGRDPAQTLRDGTAMDRFRRLVAAQGGDLSKPLPIGSHSETVTAGASGTMGDIDAMAVGLAAWRLGAGRSRPGARVQHGAGVRIHRRPGEPVVVGEPLFTLYTNAPERFGAARAELAGGWSIRDSPPQVRPLIVDRIV</sequence>
<feature type="chain" id="PRO_0000059082" description="Thymidine phosphorylase">
    <location>
        <begin position="1"/>
        <end position="427"/>
    </location>
</feature>
<name>TYPH_MYCTU</name>
<proteinExistence type="evidence at protein level"/>
<accession>P9WFS1</accession>
<accession>L0TF92</accession>
<accession>O53366</accession>
<comment type="function">
    <text evidence="1">The enzymes which catalyze the reversible phosphorolysis of pyrimidine nucleosides are involved in the degradation of these compounds and in their utilization as carbon and energy sources, or in the rescue of pyrimidine bases for nucleotide synthesis.</text>
</comment>
<comment type="catalytic activity">
    <reaction>
        <text>thymidine + phosphate = 2-deoxy-alpha-D-ribose 1-phosphate + thymine</text>
        <dbReference type="Rhea" id="RHEA:16037"/>
        <dbReference type="ChEBI" id="CHEBI:17748"/>
        <dbReference type="ChEBI" id="CHEBI:17821"/>
        <dbReference type="ChEBI" id="CHEBI:43474"/>
        <dbReference type="ChEBI" id="CHEBI:57259"/>
        <dbReference type="EC" id="2.4.2.4"/>
    </reaction>
</comment>
<comment type="subunit">
    <text evidence="1">Homodimer.</text>
</comment>
<comment type="similarity">
    <text evidence="2">Belongs to the thymidine/pyrimidine-nucleoside phosphorylase family.</text>
</comment>
<organism>
    <name type="scientific">Mycobacterium tuberculosis (strain ATCC 25618 / H37Rv)</name>
    <dbReference type="NCBI Taxonomy" id="83332"/>
    <lineage>
        <taxon>Bacteria</taxon>
        <taxon>Bacillati</taxon>
        <taxon>Actinomycetota</taxon>
        <taxon>Actinomycetes</taxon>
        <taxon>Mycobacteriales</taxon>
        <taxon>Mycobacteriaceae</taxon>
        <taxon>Mycobacterium</taxon>
        <taxon>Mycobacterium tuberculosis complex</taxon>
    </lineage>
</organism>